<protein>
    <recommendedName>
        <fullName evidence="1">Succinate--CoA ligase [ADP-forming] subunit beta</fullName>
        <ecNumber evidence="1">6.2.1.5</ecNumber>
    </recommendedName>
    <alternativeName>
        <fullName evidence="1">Succinyl-CoA synthetase subunit beta</fullName>
        <shortName evidence="1">SCS-beta</shortName>
    </alternativeName>
</protein>
<evidence type="ECO:0000255" key="1">
    <source>
        <dbReference type="HAMAP-Rule" id="MF_00558"/>
    </source>
</evidence>
<comment type="function">
    <text evidence="1">Succinyl-CoA synthetase functions in the citric acid cycle (TCA), coupling the hydrolysis of succinyl-CoA to the synthesis of either ATP or GTP and thus represents the only step of substrate-level phosphorylation in the TCA. The beta subunit provides nucleotide specificity of the enzyme and binds the substrate succinate, while the binding sites for coenzyme A and phosphate are found in the alpha subunit.</text>
</comment>
<comment type="catalytic activity">
    <reaction evidence="1">
        <text>succinate + ATP + CoA = succinyl-CoA + ADP + phosphate</text>
        <dbReference type="Rhea" id="RHEA:17661"/>
        <dbReference type="ChEBI" id="CHEBI:30031"/>
        <dbReference type="ChEBI" id="CHEBI:30616"/>
        <dbReference type="ChEBI" id="CHEBI:43474"/>
        <dbReference type="ChEBI" id="CHEBI:57287"/>
        <dbReference type="ChEBI" id="CHEBI:57292"/>
        <dbReference type="ChEBI" id="CHEBI:456216"/>
        <dbReference type="EC" id="6.2.1.5"/>
    </reaction>
    <physiologicalReaction direction="right-to-left" evidence="1">
        <dbReference type="Rhea" id="RHEA:17663"/>
    </physiologicalReaction>
</comment>
<comment type="catalytic activity">
    <reaction evidence="1">
        <text>GTP + succinate + CoA = succinyl-CoA + GDP + phosphate</text>
        <dbReference type="Rhea" id="RHEA:22120"/>
        <dbReference type="ChEBI" id="CHEBI:30031"/>
        <dbReference type="ChEBI" id="CHEBI:37565"/>
        <dbReference type="ChEBI" id="CHEBI:43474"/>
        <dbReference type="ChEBI" id="CHEBI:57287"/>
        <dbReference type="ChEBI" id="CHEBI:57292"/>
        <dbReference type="ChEBI" id="CHEBI:58189"/>
    </reaction>
    <physiologicalReaction direction="right-to-left" evidence="1">
        <dbReference type="Rhea" id="RHEA:22122"/>
    </physiologicalReaction>
</comment>
<comment type="cofactor">
    <cofactor evidence="1">
        <name>Mg(2+)</name>
        <dbReference type="ChEBI" id="CHEBI:18420"/>
    </cofactor>
    <text evidence="1">Binds 1 Mg(2+) ion per subunit.</text>
</comment>
<comment type="pathway">
    <text evidence="1">Carbohydrate metabolism; tricarboxylic acid cycle; succinate from succinyl-CoA (ligase route): step 1/1.</text>
</comment>
<comment type="subunit">
    <text evidence="1">Heterotetramer of two alpha and two beta subunits.</text>
</comment>
<comment type="similarity">
    <text evidence="1">Belongs to the succinate/malate CoA ligase beta subunit family.</text>
</comment>
<accession>Q822A1</accession>
<dbReference type="EC" id="6.2.1.5" evidence="1"/>
<dbReference type="EMBL" id="AE015925">
    <property type="protein sequence ID" value="AAP05525.1"/>
    <property type="molecule type" value="Genomic_DNA"/>
</dbReference>
<dbReference type="RefSeq" id="WP_011006739.1">
    <property type="nucleotide sequence ID" value="NC_003361.3"/>
</dbReference>
<dbReference type="SMR" id="Q822A1"/>
<dbReference type="STRING" id="227941.CCA_00784"/>
<dbReference type="KEGG" id="cca:CCA_00784"/>
<dbReference type="eggNOG" id="COG0045">
    <property type="taxonomic scope" value="Bacteria"/>
</dbReference>
<dbReference type="HOGENOM" id="CLU_037430_0_2_0"/>
<dbReference type="OrthoDB" id="9802602at2"/>
<dbReference type="UniPathway" id="UPA00223">
    <property type="reaction ID" value="UER00999"/>
</dbReference>
<dbReference type="Proteomes" id="UP000002193">
    <property type="component" value="Chromosome"/>
</dbReference>
<dbReference type="GO" id="GO:0005829">
    <property type="term" value="C:cytosol"/>
    <property type="evidence" value="ECO:0007669"/>
    <property type="project" value="TreeGrafter"/>
</dbReference>
<dbReference type="GO" id="GO:0042709">
    <property type="term" value="C:succinate-CoA ligase complex"/>
    <property type="evidence" value="ECO:0007669"/>
    <property type="project" value="TreeGrafter"/>
</dbReference>
<dbReference type="GO" id="GO:0005524">
    <property type="term" value="F:ATP binding"/>
    <property type="evidence" value="ECO:0007669"/>
    <property type="project" value="UniProtKB-UniRule"/>
</dbReference>
<dbReference type="GO" id="GO:0000287">
    <property type="term" value="F:magnesium ion binding"/>
    <property type="evidence" value="ECO:0007669"/>
    <property type="project" value="UniProtKB-UniRule"/>
</dbReference>
<dbReference type="GO" id="GO:0004775">
    <property type="term" value="F:succinate-CoA ligase (ADP-forming) activity"/>
    <property type="evidence" value="ECO:0007669"/>
    <property type="project" value="UniProtKB-UniRule"/>
</dbReference>
<dbReference type="GO" id="GO:0004776">
    <property type="term" value="F:succinate-CoA ligase (GDP-forming) activity"/>
    <property type="evidence" value="ECO:0007669"/>
    <property type="project" value="RHEA"/>
</dbReference>
<dbReference type="GO" id="GO:0006104">
    <property type="term" value="P:succinyl-CoA metabolic process"/>
    <property type="evidence" value="ECO:0007669"/>
    <property type="project" value="TreeGrafter"/>
</dbReference>
<dbReference type="GO" id="GO:0006099">
    <property type="term" value="P:tricarboxylic acid cycle"/>
    <property type="evidence" value="ECO:0007669"/>
    <property type="project" value="UniProtKB-UniRule"/>
</dbReference>
<dbReference type="FunFam" id="3.30.470.20:FF:000002">
    <property type="entry name" value="Succinate--CoA ligase [ADP-forming] subunit beta"/>
    <property type="match status" value="1"/>
</dbReference>
<dbReference type="FunFam" id="3.40.50.261:FF:000001">
    <property type="entry name" value="Succinate--CoA ligase [ADP-forming] subunit beta"/>
    <property type="match status" value="1"/>
</dbReference>
<dbReference type="Gene3D" id="3.30.1490.20">
    <property type="entry name" value="ATP-grasp fold, A domain"/>
    <property type="match status" value="1"/>
</dbReference>
<dbReference type="Gene3D" id="3.30.470.20">
    <property type="entry name" value="ATP-grasp fold, B domain"/>
    <property type="match status" value="1"/>
</dbReference>
<dbReference type="Gene3D" id="3.40.50.261">
    <property type="entry name" value="Succinyl-CoA synthetase domains"/>
    <property type="match status" value="1"/>
</dbReference>
<dbReference type="HAMAP" id="MF_00558">
    <property type="entry name" value="Succ_CoA_beta"/>
    <property type="match status" value="1"/>
</dbReference>
<dbReference type="InterPro" id="IPR013650">
    <property type="entry name" value="ATP-grasp_succ-CoA_synth-type"/>
</dbReference>
<dbReference type="InterPro" id="IPR013815">
    <property type="entry name" value="ATP_grasp_subdomain_1"/>
</dbReference>
<dbReference type="InterPro" id="IPR017866">
    <property type="entry name" value="Succ-CoA_synthase_bsu_CS"/>
</dbReference>
<dbReference type="InterPro" id="IPR005811">
    <property type="entry name" value="SUCC_ACL_C"/>
</dbReference>
<dbReference type="InterPro" id="IPR005809">
    <property type="entry name" value="Succ_CoA_ligase-like_bsu"/>
</dbReference>
<dbReference type="InterPro" id="IPR016102">
    <property type="entry name" value="Succinyl-CoA_synth-like"/>
</dbReference>
<dbReference type="NCBIfam" id="NF001913">
    <property type="entry name" value="PRK00696.1"/>
    <property type="match status" value="1"/>
</dbReference>
<dbReference type="NCBIfam" id="TIGR01016">
    <property type="entry name" value="sucCoAbeta"/>
    <property type="match status" value="1"/>
</dbReference>
<dbReference type="PANTHER" id="PTHR11815:SF10">
    <property type="entry name" value="SUCCINATE--COA LIGASE [GDP-FORMING] SUBUNIT BETA, MITOCHONDRIAL"/>
    <property type="match status" value="1"/>
</dbReference>
<dbReference type="PANTHER" id="PTHR11815">
    <property type="entry name" value="SUCCINYL-COA SYNTHETASE BETA CHAIN"/>
    <property type="match status" value="1"/>
</dbReference>
<dbReference type="Pfam" id="PF08442">
    <property type="entry name" value="ATP-grasp_2"/>
    <property type="match status" value="1"/>
</dbReference>
<dbReference type="Pfam" id="PF00549">
    <property type="entry name" value="Ligase_CoA"/>
    <property type="match status" value="1"/>
</dbReference>
<dbReference type="PIRSF" id="PIRSF001554">
    <property type="entry name" value="SucCS_beta"/>
    <property type="match status" value="1"/>
</dbReference>
<dbReference type="SUPFAM" id="SSF56059">
    <property type="entry name" value="Glutathione synthetase ATP-binding domain-like"/>
    <property type="match status" value="1"/>
</dbReference>
<dbReference type="SUPFAM" id="SSF52210">
    <property type="entry name" value="Succinyl-CoA synthetase domains"/>
    <property type="match status" value="1"/>
</dbReference>
<dbReference type="PROSITE" id="PS01217">
    <property type="entry name" value="SUCCINYL_COA_LIG_3"/>
    <property type="match status" value="1"/>
</dbReference>
<gene>
    <name evidence="1" type="primary">sucC</name>
    <name type="ordered locus">CCA_00784</name>
</gene>
<feature type="chain" id="PRO_0000102824" description="Succinate--CoA ligase [ADP-forming] subunit beta">
    <location>
        <begin position="1"/>
        <end position="388"/>
    </location>
</feature>
<feature type="domain" description="ATP-grasp" evidence="1">
    <location>
        <begin position="9"/>
        <end position="244"/>
    </location>
</feature>
<feature type="binding site" evidence="1">
    <location>
        <position position="46"/>
    </location>
    <ligand>
        <name>ATP</name>
        <dbReference type="ChEBI" id="CHEBI:30616"/>
    </ligand>
</feature>
<feature type="binding site" evidence="1">
    <location>
        <begin position="53"/>
        <end position="55"/>
    </location>
    <ligand>
        <name>ATP</name>
        <dbReference type="ChEBI" id="CHEBI:30616"/>
    </ligand>
</feature>
<feature type="binding site" evidence="1">
    <location>
        <position position="102"/>
    </location>
    <ligand>
        <name>ATP</name>
        <dbReference type="ChEBI" id="CHEBI:30616"/>
    </ligand>
</feature>
<feature type="binding site" evidence="1">
    <location>
        <position position="107"/>
    </location>
    <ligand>
        <name>ATP</name>
        <dbReference type="ChEBI" id="CHEBI:30616"/>
    </ligand>
</feature>
<feature type="binding site" evidence="1">
    <location>
        <position position="199"/>
    </location>
    <ligand>
        <name>Mg(2+)</name>
        <dbReference type="ChEBI" id="CHEBI:18420"/>
    </ligand>
</feature>
<feature type="binding site" evidence="1">
    <location>
        <position position="213"/>
    </location>
    <ligand>
        <name>Mg(2+)</name>
        <dbReference type="ChEBI" id="CHEBI:18420"/>
    </ligand>
</feature>
<feature type="binding site" evidence="1">
    <location>
        <position position="264"/>
    </location>
    <ligand>
        <name>substrate</name>
        <note>ligand shared with subunit alpha</note>
    </ligand>
</feature>
<feature type="binding site" evidence="1">
    <location>
        <begin position="321"/>
        <end position="323"/>
    </location>
    <ligand>
        <name>substrate</name>
        <note>ligand shared with subunit alpha</note>
    </ligand>
</feature>
<name>SUCC_CHLCV</name>
<proteinExistence type="inferred from homology"/>
<organism>
    <name type="scientific">Chlamydia caviae (strain ATCC VR-813 / DSM 19441 / 03DC25 / GPIC)</name>
    <name type="common">Chlamydophila caviae</name>
    <dbReference type="NCBI Taxonomy" id="227941"/>
    <lineage>
        <taxon>Bacteria</taxon>
        <taxon>Pseudomonadati</taxon>
        <taxon>Chlamydiota</taxon>
        <taxon>Chlamydiia</taxon>
        <taxon>Chlamydiales</taxon>
        <taxon>Chlamydiaceae</taxon>
        <taxon>Chlamydia/Chlamydophila group</taxon>
        <taxon>Chlamydia</taxon>
    </lineage>
</organism>
<keyword id="KW-0067">ATP-binding</keyword>
<keyword id="KW-0436">Ligase</keyword>
<keyword id="KW-0460">Magnesium</keyword>
<keyword id="KW-0479">Metal-binding</keyword>
<keyword id="KW-0547">Nucleotide-binding</keyword>
<keyword id="KW-0816">Tricarboxylic acid cycle</keyword>
<reference key="1">
    <citation type="journal article" date="2003" name="Nucleic Acids Res.">
        <title>Genome sequence of Chlamydophila caviae (Chlamydia psittaci GPIC): examining the role of niche-specific genes in the evolution of the Chlamydiaceae.</title>
        <authorList>
            <person name="Read T.D."/>
            <person name="Myers G.S.A."/>
            <person name="Brunham R.C."/>
            <person name="Nelson W.C."/>
            <person name="Paulsen I.T."/>
            <person name="Heidelberg J.F."/>
            <person name="Holtzapple E.K."/>
            <person name="Khouri H.M."/>
            <person name="Federova N.B."/>
            <person name="Carty H.A."/>
            <person name="Umayam L.A."/>
            <person name="Haft D.H."/>
            <person name="Peterson J.D."/>
            <person name="Beanan M.J."/>
            <person name="White O."/>
            <person name="Salzberg S.L."/>
            <person name="Hsia R.-C."/>
            <person name="McClarty G."/>
            <person name="Rank R.G."/>
            <person name="Bavoil P.M."/>
            <person name="Fraser C.M."/>
        </authorList>
    </citation>
    <scope>NUCLEOTIDE SEQUENCE [LARGE SCALE GENOMIC DNA]</scope>
    <source>
        <strain>ATCC VR-813 / DSM 19441 / 03DC25 / GPIC</strain>
    </source>
</reference>
<sequence length="388" mass="42069">MHLHEYQAKDLLVSYDIAIPPYRVASSVEEGQQALKELAIDAGVVKVQVHAGGRGKNGGVVVAKSPSDILAAVDKLLRMRFVSNQTSGEALPVEKVLITPLVNIAAEYYLAVIMDRKNRCPAIMLSKAGGVDIEEVAQKYPDQLLTVPLTPFARLYNYQIRQIIKFMNWEGDIRKQGAQLIKKLVQCFYDNDASLLEINPLVLTQEGDLLVLDAKITIDDNALYRHPKLEVLYDPSQENVRDVLAKQIGLSYIALDGNIGCLVNGAGLAMSTLDILKIHGGSAANFLDVGGSATEQQVQEAVSLVLSDENVEVLFINIFGGIMDCSAVASGLVAVMQTRENLIPTVVRLEGTNVDLGKDIVQRSGIPCQFTDSLNEAAQLAVALSKQG</sequence>